<comment type="function">
    <text evidence="1">Joins adenosylcobinamide-GDP and alpha-ribazole to generate adenosylcobalamin (Ado-cobalamin). Also synthesizes adenosylcobalamin 5'-phosphate from adenosylcobinamide-GDP and alpha-ribazole 5'-phosphate.</text>
</comment>
<comment type="catalytic activity">
    <reaction evidence="1">
        <text>alpha-ribazole + adenosylcob(III)inamide-GDP = adenosylcob(III)alamin + GMP + H(+)</text>
        <dbReference type="Rhea" id="RHEA:16049"/>
        <dbReference type="ChEBI" id="CHEBI:10329"/>
        <dbReference type="ChEBI" id="CHEBI:15378"/>
        <dbReference type="ChEBI" id="CHEBI:18408"/>
        <dbReference type="ChEBI" id="CHEBI:58115"/>
        <dbReference type="ChEBI" id="CHEBI:60487"/>
        <dbReference type="EC" id="2.7.8.26"/>
    </reaction>
</comment>
<comment type="catalytic activity">
    <reaction evidence="1">
        <text>alpha-ribazole 5'-phosphate + adenosylcob(III)inamide-GDP = adenosylcob(III)alamin 5'-phosphate + GMP + H(+)</text>
        <dbReference type="Rhea" id="RHEA:23560"/>
        <dbReference type="ChEBI" id="CHEBI:15378"/>
        <dbReference type="ChEBI" id="CHEBI:57918"/>
        <dbReference type="ChEBI" id="CHEBI:58115"/>
        <dbReference type="ChEBI" id="CHEBI:60487"/>
        <dbReference type="ChEBI" id="CHEBI:60493"/>
        <dbReference type="EC" id="2.7.8.26"/>
    </reaction>
</comment>
<comment type="cofactor">
    <cofactor evidence="1">
        <name>Mg(2+)</name>
        <dbReference type="ChEBI" id="CHEBI:18420"/>
    </cofactor>
</comment>
<comment type="pathway">
    <text evidence="1">Cofactor biosynthesis; adenosylcobalamin biosynthesis; adenosylcobalamin from cob(II)yrinate a,c-diamide: step 7/7.</text>
</comment>
<comment type="subcellular location">
    <subcellularLocation>
        <location evidence="1">Cell membrane</location>
        <topology evidence="1">Multi-pass membrane protein</topology>
    </subcellularLocation>
</comment>
<comment type="similarity">
    <text evidence="1">Belongs to the CobS family.</text>
</comment>
<organism>
    <name type="scientific">Methanococcoides burtonii (strain DSM 6242 / NBRC 107633 / OCM 468 / ACE-M)</name>
    <dbReference type="NCBI Taxonomy" id="259564"/>
    <lineage>
        <taxon>Archaea</taxon>
        <taxon>Methanobacteriati</taxon>
        <taxon>Methanobacteriota</taxon>
        <taxon>Stenosarchaea group</taxon>
        <taxon>Methanomicrobia</taxon>
        <taxon>Methanosarcinales</taxon>
        <taxon>Methanosarcinaceae</taxon>
        <taxon>Methanococcoides</taxon>
    </lineage>
</organism>
<gene>
    <name evidence="1" type="primary">cobS</name>
    <name type="ordered locus">Mbur_2092</name>
</gene>
<accession>Q12UB0</accession>
<proteinExistence type="inferred from homology"/>
<evidence type="ECO:0000255" key="1">
    <source>
        <dbReference type="HAMAP-Rule" id="MF_00719"/>
    </source>
</evidence>
<name>COBS_METBU</name>
<reference key="1">
    <citation type="journal article" date="2009" name="ISME J.">
        <title>The genome sequence of the psychrophilic archaeon, Methanococcoides burtonii: the role of genome evolution in cold adaptation.</title>
        <authorList>
            <person name="Allen M.A."/>
            <person name="Lauro F.M."/>
            <person name="Williams T.J."/>
            <person name="Burg D."/>
            <person name="Siddiqui K.S."/>
            <person name="De Francisci D."/>
            <person name="Chong K.W."/>
            <person name="Pilak O."/>
            <person name="Chew H.H."/>
            <person name="De Maere M.Z."/>
            <person name="Ting L."/>
            <person name="Katrib M."/>
            <person name="Ng C."/>
            <person name="Sowers K.R."/>
            <person name="Galperin M.Y."/>
            <person name="Anderson I.J."/>
            <person name="Ivanova N."/>
            <person name="Dalin E."/>
            <person name="Martinez M."/>
            <person name="Lapidus A."/>
            <person name="Hauser L."/>
            <person name="Land M."/>
            <person name="Thomas T."/>
            <person name="Cavicchioli R."/>
        </authorList>
    </citation>
    <scope>NUCLEOTIDE SEQUENCE [LARGE SCALE GENOMIC DNA]</scope>
    <source>
        <strain>DSM 6242 / NBRC 107633 / OCM 468 / ACE-M</strain>
    </source>
</reference>
<sequence length="271" mass="28595">MSGFLLALRTTFGFLSTIPVGMSMEGLDELVKRSYLQTFAGIVLGSMIGIFAYLTESFLPSTISAVLIMVFIYYITGLNHLDGLGDFGDGATAHGSLEKKVNALKDMSLGIGGVSYTVLALIALYASISSLQAEVLFFSDNAALIIAISLLIAEIGAKQAMLTVAAFGKPIHEGLGSMIINNTTFPRYAVSFVLGALVCVLAFGTLGIIGYISAIVTAFVILNISIRHFKGINGDCIGTSNEIARIIVLMVLTVAITAVNNGYGGLFWTPL</sequence>
<keyword id="KW-1003">Cell membrane</keyword>
<keyword id="KW-0169">Cobalamin biosynthesis</keyword>
<keyword id="KW-0460">Magnesium</keyword>
<keyword id="KW-0472">Membrane</keyword>
<keyword id="KW-0808">Transferase</keyword>
<keyword id="KW-0812">Transmembrane</keyword>
<keyword id="KW-1133">Transmembrane helix</keyword>
<feature type="chain" id="PRO_1000045775" description="Adenosylcobinamide-GDP ribazoletransferase">
    <location>
        <begin position="1"/>
        <end position="271"/>
    </location>
</feature>
<feature type="transmembrane region" description="Helical" evidence="1">
    <location>
        <begin position="4"/>
        <end position="24"/>
    </location>
</feature>
<feature type="transmembrane region" description="Helical" evidence="1">
    <location>
        <begin position="35"/>
        <end position="55"/>
    </location>
</feature>
<feature type="transmembrane region" description="Helical" evidence="1">
    <location>
        <begin position="58"/>
        <end position="78"/>
    </location>
</feature>
<feature type="transmembrane region" description="Helical" evidence="1">
    <location>
        <begin position="108"/>
        <end position="128"/>
    </location>
</feature>
<feature type="transmembrane region" description="Helical" evidence="1">
    <location>
        <begin position="135"/>
        <end position="155"/>
    </location>
</feature>
<feature type="transmembrane region" description="Helical" evidence="1">
    <location>
        <begin position="192"/>
        <end position="212"/>
    </location>
</feature>
<feature type="transmembrane region" description="Helical" evidence="1">
    <location>
        <begin position="246"/>
        <end position="266"/>
    </location>
</feature>
<dbReference type="EC" id="2.7.8.26" evidence="1"/>
<dbReference type="EMBL" id="CP000300">
    <property type="protein sequence ID" value="ABE52966.1"/>
    <property type="molecule type" value="Genomic_DNA"/>
</dbReference>
<dbReference type="RefSeq" id="WP_011500106.1">
    <property type="nucleotide sequence ID" value="NC_007955.1"/>
</dbReference>
<dbReference type="STRING" id="259564.Mbur_2092"/>
<dbReference type="GeneID" id="3998174"/>
<dbReference type="KEGG" id="mbu:Mbur_2092"/>
<dbReference type="HOGENOM" id="CLU_057426_2_0_2"/>
<dbReference type="OrthoDB" id="11748at2157"/>
<dbReference type="UniPathway" id="UPA00148">
    <property type="reaction ID" value="UER00238"/>
</dbReference>
<dbReference type="Proteomes" id="UP000001979">
    <property type="component" value="Chromosome"/>
</dbReference>
<dbReference type="GO" id="GO:0005886">
    <property type="term" value="C:plasma membrane"/>
    <property type="evidence" value="ECO:0007669"/>
    <property type="project" value="UniProtKB-SubCell"/>
</dbReference>
<dbReference type="GO" id="GO:0051073">
    <property type="term" value="F:adenosylcobinamide-GDP ribazoletransferase activity"/>
    <property type="evidence" value="ECO:0007669"/>
    <property type="project" value="UniProtKB-UniRule"/>
</dbReference>
<dbReference type="GO" id="GO:0008818">
    <property type="term" value="F:cobalamin 5'-phosphate synthase activity"/>
    <property type="evidence" value="ECO:0007669"/>
    <property type="project" value="UniProtKB-UniRule"/>
</dbReference>
<dbReference type="GO" id="GO:0009236">
    <property type="term" value="P:cobalamin biosynthetic process"/>
    <property type="evidence" value="ECO:0007669"/>
    <property type="project" value="UniProtKB-UniRule"/>
</dbReference>
<dbReference type="HAMAP" id="MF_00719">
    <property type="entry name" value="CobS"/>
    <property type="match status" value="1"/>
</dbReference>
<dbReference type="InterPro" id="IPR003805">
    <property type="entry name" value="CobS"/>
</dbReference>
<dbReference type="NCBIfam" id="TIGR00317">
    <property type="entry name" value="cobS"/>
    <property type="match status" value="1"/>
</dbReference>
<dbReference type="PANTHER" id="PTHR34148">
    <property type="entry name" value="ADENOSYLCOBINAMIDE-GDP RIBAZOLETRANSFERASE"/>
    <property type="match status" value="1"/>
</dbReference>
<dbReference type="PANTHER" id="PTHR34148:SF1">
    <property type="entry name" value="ADENOSYLCOBINAMIDE-GDP RIBAZOLETRANSFERASE"/>
    <property type="match status" value="1"/>
</dbReference>
<dbReference type="Pfam" id="PF02654">
    <property type="entry name" value="CobS"/>
    <property type="match status" value="1"/>
</dbReference>
<protein>
    <recommendedName>
        <fullName evidence="1">Adenosylcobinamide-GDP ribazoletransferase</fullName>
        <ecNumber evidence="1">2.7.8.26</ecNumber>
    </recommendedName>
    <alternativeName>
        <fullName evidence="1">Cobalamin synthase</fullName>
    </alternativeName>
    <alternativeName>
        <fullName evidence="1">Cobalamin-5'-phosphate synthase</fullName>
    </alternativeName>
</protein>